<proteinExistence type="evidence at protein level"/>
<sequence length="233" mass="25941">MIWKTLIVAFMATAVLAQEIDLSDQRREQYRNMLAAQCRKMGAEDKVKDVESSVRNFVECLRGIVDPQAIKKEIEEAKPKGELDEVFKKYCAKAPVLKTCISSLLDGVRPCVDKVAIDHYGPLLNTTNQLIDFVCYKDGERIALFIAHGGSECFKNSTEDLKKCAEEMKNSFPSVEAAKAMSLPDKCGKFDDLTTCMVTSLEKCENPTPANMAESLLKFIRKDSPCNAAVPKD</sequence>
<evidence type="ECO:0000255" key="1"/>
<evidence type="ECO:0000269" key="2">
    <source>
    </source>
</evidence>
<evidence type="ECO:0000305" key="3"/>
<evidence type="ECO:0000312" key="4">
    <source>
        <dbReference type="EMBL" id="AAA74052.1"/>
    </source>
</evidence>
<comment type="subcellular location">
    <subcellularLocation>
        <location>Secreted</location>
    </subcellularLocation>
</comment>
<comment type="tissue specificity">
    <text evidence="2">Hemolymph.</text>
</comment>
<comment type="developmental stage">
    <text evidence="2">Expressed during all stages of development.</text>
</comment>
<comment type="PTM">
    <text evidence="2 3">N-glycosylated.</text>
</comment>
<comment type="similarity">
    <text evidence="3">Belongs to the UPF0408 family.</text>
</comment>
<feature type="signal peptide" evidence="1">
    <location>
        <begin position="1"/>
        <end position="17"/>
    </location>
</feature>
<feature type="chain" id="PRO_0000021415" description="27 kDa hemolymph glycoprotein">
    <location>
        <begin position="18"/>
        <end position="233"/>
    </location>
</feature>
<feature type="glycosylation site" description="N-linked (GlcNAc...) asparagine" evidence="1">
    <location>
        <position position="125"/>
    </location>
</feature>
<feature type="glycosylation site" description="N-linked (GlcNAc...) asparagine" evidence="1">
    <location>
        <position position="156"/>
    </location>
</feature>
<protein>
    <recommendedName>
        <fullName>27 kDa hemolymph glycoprotein</fullName>
    </recommendedName>
</protein>
<keyword id="KW-0903">Direct protein sequencing</keyword>
<keyword id="KW-0325">Glycoprotein</keyword>
<keyword id="KW-0964">Secreted</keyword>
<keyword id="KW-0732">Signal</keyword>
<reference evidence="3" key="1">
    <citation type="journal article" date="1995" name="Insect Mol. Biol.">
        <title>Isolation, cloning and deduced amino acid sequence of a novel glycoprotein from the haemolymph of the hawkmoth Manduca sexta.</title>
        <authorList>
            <person name="Samaraweera P."/>
            <person name="Law J.H."/>
        </authorList>
    </citation>
    <scope>NUCLEOTIDE SEQUENCE [MRNA]</scope>
    <scope>PROTEIN SEQUENCE OF 34-48</scope>
    <scope>TISSUE SPECIFICITY</scope>
    <scope>DEVELOPMENTAL STAGE</scope>
    <scope>GLYCOSYLATION</scope>
    <source>
        <tissue>Larval fat body</tissue>
    </source>
</reference>
<accession>Q25513</accession>
<dbReference type="EMBL" id="L31964">
    <property type="protein sequence ID" value="AAA74052.1"/>
    <property type="molecule type" value="mRNA"/>
</dbReference>
<dbReference type="RefSeq" id="XP_037299602.1">
    <property type="nucleotide sequence ID" value="XM_037443705.1"/>
</dbReference>
<dbReference type="SMR" id="Q25513"/>
<dbReference type="EnsemblMetazoa" id="XM_037443705.1">
    <property type="protein sequence ID" value="XP_037299602.1"/>
    <property type="gene ID" value="LOC115455326"/>
</dbReference>
<dbReference type="GeneID" id="115455326"/>
<dbReference type="OrthoDB" id="6512861at2759"/>
<dbReference type="GO" id="GO:0005576">
    <property type="term" value="C:extracellular region"/>
    <property type="evidence" value="ECO:0007669"/>
    <property type="project" value="UniProtKB-SubCell"/>
</dbReference>
<dbReference type="InterPro" id="IPR009832">
    <property type="entry name" value="DUF1397"/>
</dbReference>
<dbReference type="PANTHER" id="PTHR20997">
    <property type="entry name" value="EG:BACR42I17.2 PROTEIN-RELATED"/>
    <property type="match status" value="1"/>
</dbReference>
<dbReference type="PANTHER" id="PTHR20997:SF2">
    <property type="entry name" value="EG:BACR42I17.2 PROTEIN-RELATED"/>
    <property type="match status" value="1"/>
</dbReference>
<dbReference type="Pfam" id="PF07165">
    <property type="entry name" value="DUF1397"/>
    <property type="match status" value="1"/>
</dbReference>
<organism evidence="4">
    <name type="scientific">Manduca sexta</name>
    <name type="common">Tobacco hawkmoth</name>
    <name type="synonym">Tobacco hornworm</name>
    <dbReference type="NCBI Taxonomy" id="7130"/>
    <lineage>
        <taxon>Eukaryota</taxon>
        <taxon>Metazoa</taxon>
        <taxon>Ecdysozoa</taxon>
        <taxon>Arthropoda</taxon>
        <taxon>Hexapoda</taxon>
        <taxon>Insecta</taxon>
        <taxon>Pterygota</taxon>
        <taxon>Neoptera</taxon>
        <taxon>Endopterygota</taxon>
        <taxon>Lepidoptera</taxon>
        <taxon>Glossata</taxon>
        <taxon>Ditrysia</taxon>
        <taxon>Bombycoidea</taxon>
        <taxon>Sphingidae</taxon>
        <taxon>Sphinginae</taxon>
        <taxon>Sphingini</taxon>
        <taxon>Manduca</taxon>
    </lineage>
</organism>
<name>HGLY_MANSE</name>